<reference key="1">
    <citation type="submission" date="2008-02" db="EMBL/GenBank/DDBJ databases">
        <title>Complete sequence of Shewanella woodyi ATCC 51908.</title>
        <authorList>
            <consortium name="US DOE Joint Genome Institute"/>
            <person name="Copeland A."/>
            <person name="Lucas S."/>
            <person name="Lapidus A."/>
            <person name="Glavina del Rio T."/>
            <person name="Dalin E."/>
            <person name="Tice H."/>
            <person name="Bruce D."/>
            <person name="Goodwin L."/>
            <person name="Pitluck S."/>
            <person name="Sims D."/>
            <person name="Brettin T."/>
            <person name="Detter J.C."/>
            <person name="Han C."/>
            <person name="Kuske C.R."/>
            <person name="Schmutz J."/>
            <person name="Larimer F."/>
            <person name="Land M."/>
            <person name="Hauser L."/>
            <person name="Kyrpides N."/>
            <person name="Lykidis A."/>
            <person name="Zhao J.-S."/>
            <person name="Richardson P."/>
        </authorList>
    </citation>
    <scope>NUCLEOTIDE SEQUENCE [LARGE SCALE GENOMIC DNA]</scope>
    <source>
        <strain>ATCC 51908 / MS32</strain>
    </source>
</reference>
<sequence>MNRILLTLLTLTLLAGCQRVAVEETKLVPPAVEKTVLNVGTIYGSQIYVTTGQGEAGFDYEMASRFADHLELELAMKPYSNIKELYQALNSGEVDLIAAGLADTPTRRENFRLGPPLYRVNQVLVYKQGTPQPKDISQLKDEITVITDSSFVDTLSQLQKIYPELVWDQEQDKDNEELLAMIARGEISYTIADSTTFEISRRYMPELRAGLTLKEKQAIVWLLPAQNSDKLMSELLTFWHGEKLDGTLAHLDEKYFAHVKRFDYVDTRAFLRAIDNKLPKYKERFQYYAGDLDWRKLAATAYQESHWNPNARSPTGVRGLMMLTLPTAKQMGIENRLDAEQSIKGGAKYLRGILNRLPDSIPDNQRMWFALASYNIGYGHVEDARKLAESMGLNPSAWRDLKEVLPLLQKRKYYKQTRYGYARGNEAVHYVDNIRRYYDTLVWIDNQNKLLEENQALIEESQLADQIGIGEKAITGAQPE</sequence>
<evidence type="ECO:0000255" key="1">
    <source>
        <dbReference type="HAMAP-Rule" id="MF_02016"/>
    </source>
</evidence>
<accession>B1KLC4</accession>
<comment type="function">
    <text evidence="1">Murein-degrading enzyme that degrades murein glycan strands and insoluble, high-molecular weight murein sacculi, with the concomitant formation of a 1,6-anhydromuramoyl product. Lytic transglycosylases (LTs) play an integral role in the metabolism of the peptidoglycan (PG) sacculus. Their lytic action creates space within the PG sacculus to allow for its expansion as well as for the insertion of various structures such as secretion systems and flagella.</text>
</comment>
<comment type="catalytic activity">
    <reaction evidence="1">
        <text>Exolytic cleavage of the (1-&gt;4)-beta-glycosidic linkage between N-acetylmuramic acid (MurNAc) and N-acetylglucosamine (GlcNAc) residues in peptidoglycan, from either the reducing or the non-reducing ends of the peptidoglycan chains, with concomitant formation of a 1,6-anhydrobond in the MurNAc residue.</text>
        <dbReference type="EC" id="4.2.2.n1"/>
    </reaction>
</comment>
<comment type="subcellular location">
    <subcellularLocation>
        <location>Cell outer membrane</location>
        <topology>Peripheral membrane protein</topology>
    </subcellularLocation>
    <text evidence="1">Attached to the inner leaflet of the outer membrane.</text>
</comment>
<comment type="domain">
    <text evidence="1">The N-terminal domain does not have lytic activity and probably modulates enzymatic activity. The C-terminal domain is the catalytic active domain.</text>
</comment>
<comment type="similarity">
    <text evidence="1">In the N-terminal section; belongs to the bacterial solute-binding protein 3 family.</text>
</comment>
<comment type="similarity">
    <text evidence="1">In the C-terminal section; belongs to the transglycosylase Slt family.</text>
</comment>
<feature type="signal peptide" evidence="1">
    <location>
        <begin position="1"/>
        <end position="15"/>
    </location>
</feature>
<feature type="chain" id="PRO_5000317081" description="Membrane-bound lytic murein transglycosylase F">
    <location>
        <begin position="16"/>
        <end position="480"/>
    </location>
</feature>
<feature type="region of interest" description="Non-LT domain" evidence="1">
    <location>
        <begin position="16"/>
        <end position="259"/>
    </location>
</feature>
<feature type="region of interest" description="LT domain" evidence="1">
    <location>
        <begin position="260"/>
        <end position="480"/>
    </location>
</feature>
<feature type="active site" evidence="1">
    <location>
        <position position="304"/>
    </location>
</feature>
<name>MLTF_SHEWM</name>
<organism>
    <name type="scientific">Shewanella woodyi (strain ATCC 51908 / MS32)</name>
    <dbReference type="NCBI Taxonomy" id="392500"/>
    <lineage>
        <taxon>Bacteria</taxon>
        <taxon>Pseudomonadati</taxon>
        <taxon>Pseudomonadota</taxon>
        <taxon>Gammaproteobacteria</taxon>
        <taxon>Alteromonadales</taxon>
        <taxon>Shewanellaceae</taxon>
        <taxon>Shewanella</taxon>
    </lineage>
</organism>
<proteinExistence type="inferred from homology"/>
<gene>
    <name evidence="1" type="primary">mltF</name>
    <name type="ordered locus">Swoo_1563</name>
</gene>
<keyword id="KW-0998">Cell outer membrane</keyword>
<keyword id="KW-0961">Cell wall biogenesis/degradation</keyword>
<keyword id="KW-0456">Lyase</keyword>
<keyword id="KW-0472">Membrane</keyword>
<keyword id="KW-1185">Reference proteome</keyword>
<keyword id="KW-0732">Signal</keyword>
<dbReference type="EC" id="4.2.2.n1" evidence="1"/>
<dbReference type="EMBL" id="CP000961">
    <property type="protein sequence ID" value="ACA85849.1"/>
    <property type="molecule type" value="Genomic_DNA"/>
</dbReference>
<dbReference type="RefSeq" id="WP_012324195.1">
    <property type="nucleotide sequence ID" value="NC_010506.1"/>
</dbReference>
<dbReference type="SMR" id="B1KLC4"/>
<dbReference type="STRING" id="392500.Swoo_1563"/>
<dbReference type="CAZy" id="GH23">
    <property type="family name" value="Glycoside Hydrolase Family 23"/>
</dbReference>
<dbReference type="KEGG" id="swd:Swoo_1563"/>
<dbReference type="eggNOG" id="COG4623">
    <property type="taxonomic scope" value="Bacteria"/>
</dbReference>
<dbReference type="HOGENOM" id="CLU_027494_0_1_6"/>
<dbReference type="Proteomes" id="UP000002168">
    <property type="component" value="Chromosome"/>
</dbReference>
<dbReference type="GO" id="GO:0009279">
    <property type="term" value="C:cell outer membrane"/>
    <property type="evidence" value="ECO:0007669"/>
    <property type="project" value="UniProtKB-SubCell"/>
</dbReference>
<dbReference type="GO" id="GO:0008933">
    <property type="term" value="F:peptidoglycan lytic transglycosylase activity"/>
    <property type="evidence" value="ECO:0007669"/>
    <property type="project" value="UniProtKB-UniRule"/>
</dbReference>
<dbReference type="GO" id="GO:0016998">
    <property type="term" value="P:cell wall macromolecule catabolic process"/>
    <property type="evidence" value="ECO:0007669"/>
    <property type="project" value="UniProtKB-UniRule"/>
</dbReference>
<dbReference type="GO" id="GO:0071555">
    <property type="term" value="P:cell wall organization"/>
    <property type="evidence" value="ECO:0007669"/>
    <property type="project" value="UniProtKB-KW"/>
</dbReference>
<dbReference type="GO" id="GO:0009253">
    <property type="term" value="P:peptidoglycan catabolic process"/>
    <property type="evidence" value="ECO:0007669"/>
    <property type="project" value="TreeGrafter"/>
</dbReference>
<dbReference type="CDD" id="cd13403">
    <property type="entry name" value="MLTF-like"/>
    <property type="match status" value="1"/>
</dbReference>
<dbReference type="CDD" id="cd01009">
    <property type="entry name" value="PBP2_YfhD_N"/>
    <property type="match status" value="1"/>
</dbReference>
<dbReference type="FunFam" id="1.10.530.10:FF:000003">
    <property type="entry name" value="Membrane-bound lytic murein transglycosylase F"/>
    <property type="match status" value="1"/>
</dbReference>
<dbReference type="Gene3D" id="1.10.530.10">
    <property type="match status" value="1"/>
</dbReference>
<dbReference type="Gene3D" id="3.40.190.10">
    <property type="entry name" value="Periplasmic binding protein-like II"/>
    <property type="match status" value="2"/>
</dbReference>
<dbReference type="HAMAP" id="MF_02016">
    <property type="entry name" value="MltF"/>
    <property type="match status" value="1"/>
</dbReference>
<dbReference type="InterPro" id="IPR023346">
    <property type="entry name" value="Lysozyme-like_dom_sf"/>
</dbReference>
<dbReference type="InterPro" id="IPR023703">
    <property type="entry name" value="MltF"/>
</dbReference>
<dbReference type="InterPro" id="IPR001638">
    <property type="entry name" value="Solute-binding_3/MltF_N"/>
</dbReference>
<dbReference type="InterPro" id="IPR008258">
    <property type="entry name" value="Transglycosylase_SLT_dom_1"/>
</dbReference>
<dbReference type="NCBIfam" id="NF008112">
    <property type="entry name" value="PRK10859.1"/>
    <property type="match status" value="1"/>
</dbReference>
<dbReference type="PANTHER" id="PTHR35936">
    <property type="entry name" value="MEMBRANE-BOUND LYTIC MUREIN TRANSGLYCOSYLASE F"/>
    <property type="match status" value="1"/>
</dbReference>
<dbReference type="PANTHER" id="PTHR35936:SF32">
    <property type="entry name" value="MEMBRANE-BOUND LYTIC MUREIN TRANSGLYCOSYLASE F"/>
    <property type="match status" value="1"/>
</dbReference>
<dbReference type="Pfam" id="PF00497">
    <property type="entry name" value="SBP_bac_3"/>
    <property type="match status" value="1"/>
</dbReference>
<dbReference type="Pfam" id="PF01464">
    <property type="entry name" value="SLT"/>
    <property type="match status" value="1"/>
</dbReference>
<dbReference type="SMART" id="SM00062">
    <property type="entry name" value="PBPb"/>
    <property type="match status" value="1"/>
</dbReference>
<dbReference type="SUPFAM" id="SSF53955">
    <property type="entry name" value="Lysozyme-like"/>
    <property type="match status" value="1"/>
</dbReference>
<dbReference type="SUPFAM" id="SSF53850">
    <property type="entry name" value="Periplasmic binding protein-like II"/>
    <property type="match status" value="1"/>
</dbReference>
<dbReference type="PROSITE" id="PS51257">
    <property type="entry name" value="PROKAR_LIPOPROTEIN"/>
    <property type="match status" value="1"/>
</dbReference>
<protein>
    <recommendedName>
        <fullName evidence="1">Membrane-bound lytic murein transglycosylase F</fullName>
        <ecNumber evidence="1">4.2.2.n1</ecNumber>
    </recommendedName>
    <alternativeName>
        <fullName evidence="1">Murein lyase F</fullName>
    </alternativeName>
</protein>